<proteinExistence type="evidence at transcript level"/>
<accession>P60603</accession>
<accession>A2BHV9</accession>
<accession>Q9CQ98</accession>
<accession>Q9H1N2</accession>
<name>ROMO1_MOUSE</name>
<comment type="function">
    <text evidence="1">Has antibacterial activity against a variety of bacteria including S.aureus, P.aeruginosa and M.tuberculosis. Acts by inducing bacterial membrane breakage (By similarity).</text>
</comment>
<comment type="function">
    <text evidence="1">Induces production of reactive oxygen species (ROS) which are necessary for cell proliferation. May play a role in inducing oxidative DNA damage and replicative senescence. May play a role in the coordination of mitochondrial morphology and cell proliferation (By similarity).</text>
</comment>
<comment type="subcellular location">
    <subcellularLocation>
        <location evidence="1">Mitochondrion inner membrane</location>
        <topology evidence="1">Single-pass membrane protein</topology>
    </subcellularLocation>
</comment>
<comment type="tissue specificity">
    <text evidence="3">Detected in brain, liver and kidney.</text>
</comment>
<comment type="similarity">
    <text evidence="4">Belongs to the MGR2 family.</text>
</comment>
<reference key="1">
    <citation type="submission" date="2001-03" db="EMBL/GenBank/DDBJ databases">
        <title>Identifying different gene expression using substraction suppresion hybridization.</title>
        <authorList>
            <person name="Zhao S."/>
            <person name="Zhang Y."/>
            <person name="Yu Y."/>
            <person name="Ge S."/>
            <person name="Geng Y."/>
            <person name="Cui C."/>
            <person name="Yang T."/>
        </authorList>
    </citation>
    <scope>NUCLEOTIDE SEQUENCE [MRNA]</scope>
    <source>
        <strain>BALB/cJ</strain>
        <tissue>Liver</tissue>
    </source>
</reference>
<reference key="2">
    <citation type="journal article" date="2005" name="Science">
        <title>The transcriptional landscape of the mammalian genome.</title>
        <authorList>
            <person name="Carninci P."/>
            <person name="Kasukawa T."/>
            <person name="Katayama S."/>
            <person name="Gough J."/>
            <person name="Frith M.C."/>
            <person name="Maeda N."/>
            <person name="Oyama R."/>
            <person name="Ravasi T."/>
            <person name="Lenhard B."/>
            <person name="Wells C."/>
            <person name="Kodzius R."/>
            <person name="Shimokawa K."/>
            <person name="Bajic V.B."/>
            <person name="Brenner S.E."/>
            <person name="Batalov S."/>
            <person name="Forrest A.R."/>
            <person name="Zavolan M."/>
            <person name="Davis M.J."/>
            <person name="Wilming L.G."/>
            <person name="Aidinis V."/>
            <person name="Allen J.E."/>
            <person name="Ambesi-Impiombato A."/>
            <person name="Apweiler R."/>
            <person name="Aturaliya R.N."/>
            <person name="Bailey T.L."/>
            <person name="Bansal M."/>
            <person name="Baxter L."/>
            <person name="Beisel K.W."/>
            <person name="Bersano T."/>
            <person name="Bono H."/>
            <person name="Chalk A.M."/>
            <person name="Chiu K.P."/>
            <person name="Choudhary V."/>
            <person name="Christoffels A."/>
            <person name="Clutterbuck D.R."/>
            <person name="Crowe M.L."/>
            <person name="Dalla E."/>
            <person name="Dalrymple B.P."/>
            <person name="de Bono B."/>
            <person name="Della Gatta G."/>
            <person name="di Bernardo D."/>
            <person name="Down T."/>
            <person name="Engstrom P."/>
            <person name="Fagiolini M."/>
            <person name="Faulkner G."/>
            <person name="Fletcher C.F."/>
            <person name="Fukushima T."/>
            <person name="Furuno M."/>
            <person name="Futaki S."/>
            <person name="Gariboldi M."/>
            <person name="Georgii-Hemming P."/>
            <person name="Gingeras T.R."/>
            <person name="Gojobori T."/>
            <person name="Green R.E."/>
            <person name="Gustincich S."/>
            <person name="Harbers M."/>
            <person name="Hayashi Y."/>
            <person name="Hensch T.K."/>
            <person name="Hirokawa N."/>
            <person name="Hill D."/>
            <person name="Huminiecki L."/>
            <person name="Iacono M."/>
            <person name="Ikeo K."/>
            <person name="Iwama A."/>
            <person name="Ishikawa T."/>
            <person name="Jakt M."/>
            <person name="Kanapin A."/>
            <person name="Katoh M."/>
            <person name="Kawasawa Y."/>
            <person name="Kelso J."/>
            <person name="Kitamura H."/>
            <person name="Kitano H."/>
            <person name="Kollias G."/>
            <person name="Krishnan S.P."/>
            <person name="Kruger A."/>
            <person name="Kummerfeld S.K."/>
            <person name="Kurochkin I.V."/>
            <person name="Lareau L.F."/>
            <person name="Lazarevic D."/>
            <person name="Lipovich L."/>
            <person name="Liu J."/>
            <person name="Liuni S."/>
            <person name="McWilliam S."/>
            <person name="Madan Babu M."/>
            <person name="Madera M."/>
            <person name="Marchionni L."/>
            <person name="Matsuda H."/>
            <person name="Matsuzawa S."/>
            <person name="Miki H."/>
            <person name="Mignone F."/>
            <person name="Miyake S."/>
            <person name="Morris K."/>
            <person name="Mottagui-Tabar S."/>
            <person name="Mulder N."/>
            <person name="Nakano N."/>
            <person name="Nakauchi H."/>
            <person name="Ng P."/>
            <person name="Nilsson R."/>
            <person name="Nishiguchi S."/>
            <person name="Nishikawa S."/>
            <person name="Nori F."/>
            <person name="Ohara O."/>
            <person name="Okazaki Y."/>
            <person name="Orlando V."/>
            <person name="Pang K.C."/>
            <person name="Pavan W.J."/>
            <person name="Pavesi G."/>
            <person name="Pesole G."/>
            <person name="Petrovsky N."/>
            <person name="Piazza S."/>
            <person name="Reed J."/>
            <person name="Reid J.F."/>
            <person name="Ring B.Z."/>
            <person name="Ringwald M."/>
            <person name="Rost B."/>
            <person name="Ruan Y."/>
            <person name="Salzberg S.L."/>
            <person name="Sandelin A."/>
            <person name="Schneider C."/>
            <person name="Schoenbach C."/>
            <person name="Sekiguchi K."/>
            <person name="Semple C.A."/>
            <person name="Seno S."/>
            <person name="Sessa L."/>
            <person name="Sheng Y."/>
            <person name="Shibata Y."/>
            <person name="Shimada H."/>
            <person name="Shimada K."/>
            <person name="Silva D."/>
            <person name="Sinclair B."/>
            <person name="Sperling S."/>
            <person name="Stupka E."/>
            <person name="Sugiura K."/>
            <person name="Sultana R."/>
            <person name="Takenaka Y."/>
            <person name="Taki K."/>
            <person name="Tammoja K."/>
            <person name="Tan S.L."/>
            <person name="Tang S."/>
            <person name="Taylor M.S."/>
            <person name="Tegner J."/>
            <person name="Teichmann S.A."/>
            <person name="Ueda H.R."/>
            <person name="van Nimwegen E."/>
            <person name="Verardo R."/>
            <person name="Wei C.L."/>
            <person name="Yagi K."/>
            <person name="Yamanishi H."/>
            <person name="Zabarovsky E."/>
            <person name="Zhu S."/>
            <person name="Zimmer A."/>
            <person name="Hide W."/>
            <person name="Bult C."/>
            <person name="Grimmond S.M."/>
            <person name="Teasdale R.D."/>
            <person name="Liu E.T."/>
            <person name="Brusic V."/>
            <person name="Quackenbush J."/>
            <person name="Wahlestedt C."/>
            <person name="Mattick J.S."/>
            <person name="Hume D.A."/>
            <person name="Kai C."/>
            <person name="Sasaki D."/>
            <person name="Tomaru Y."/>
            <person name="Fukuda S."/>
            <person name="Kanamori-Katayama M."/>
            <person name="Suzuki M."/>
            <person name="Aoki J."/>
            <person name="Arakawa T."/>
            <person name="Iida J."/>
            <person name="Imamura K."/>
            <person name="Itoh M."/>
            <person name="Kato T."/>
            <person name="Kawaji H."/>
            <person name="Kawagashira N."/>
            <person name="Kawashima T."/>
            <person name="Kojima M."/>
            <person name="Kondo S."/>
            <person name="Konno H."/>
            <person name="Nakano K."/>
            <person name="Ninomiya N."/>
            <person name="Nishio T."/>
            <person name="Okada M."/>
            <person name="Plessy C."/>
            <person name="Shibata K."/>
            <person name="Shiraki T."/>
            <person name="Suzuki S."/>
            <person name="Tagami M."/>
            <person name="Waki K."/>
            <person name="Watahiki A."/>
            <person name="Okamura-Oho Y."/>
            <person name="Suzuki H."/>
            <person name="Kawai J."/>
            <person name="Hayashizaki Y."/>
        </authorList>
    </citation>
    <scope>NUCLEOTIDE SEQUENCE [LARGE SCALE MRNA]</scope>
    <source>
        <strain>C57BL/6J</strain>
        <tissue>Embryo</tissue>
        <tissue>Small intestine</tissue>
    </source>
</reference>
<reference key="3">
    <citation type="journal article" date="2009" name="PLoS Biol.">
        <title>Lineage-specific biology revealed by a finished genome assembly of the mouse.</title>
        <authorList>
            <person name="Church D.M."/>
            <person name="Goodstadt L."/>
            <person name="Hillier L.W."/>
            <person name="Zody M.C."/>
            <person name="Goldstein S."/>
            <person name="She X."/>
            <person name="Bult C.J."/>
            <person name="Agarwala R."/>
            <person name="Cherry J.L."/>
            <person name="DiCuccio M."/>
            <person name="Hlavina W."/>
            <person name="Kapustin Y."/>
            <person name="Meric P."/>
            <person name="Maglott D."/>
            <person name="Birtle Z."/>
            <person name="Marques A.C."/>
            <person name="Graves T."/>
            <person name="Zhou S."/>
            <person name="Teague B."/>
            <person name="Potamousis K."/>
            <person name="Churas C."/>
            <person name="Place M."/>
            <person name="Herschleb J."/>
            <person name="Runnheim R."/>
            <person name="Forrest D."/>
            <person name="Amos-Landgraf J."/>
            <person name="Schwartz D.C."/>
            <person name="Cheng Z."/>
            <person name="Lindblad-Toh K."/>
            <person name="Eichler E.E."/>
            <person name="Ponting C.P."/>
        </authorList>
    </citation>
    <scope>NUCLEOTIDE SEQUENCE [LARGE SCALE GENOMIC DNA]</scope>
    <source>
        <strain>C57BL/6J</strain>
    </source>
</reference>
<reference key="4">
    <citation type="journal article" date="2004" name="Genome Res.">
        <title>The status, quality, and expansion of the NIH full-length cDNA project: the Mammalian Gene Collection (MGC).</title>
        <authorList>
            <consortium name="The MGC Project Team"/>
        </authorList>
    </citation>
    <scope>NUCLEOTIDE SEQUENCE [LARGE SCALE MRNA]</scope>
    <source>
        <strain>C57BL/6J</strain>
        <tissue>Mammary gland</tissue>
    </source>
</reference>
<reference key="5">
    <citation type="journal article" date="2006" name="Biochem. Biophys. Res. Commun.">
        <title>A novel protein, Romo1, induces ROS production in the mitochondria.</title>
        <authorList>
            <person name="Chung Y.M."/>
            <person name="Kim J.S."/>
            <person name="Yoo Y.D."/>
        </authorList>
    </citation>
    <scope>TISSUE SPECIFICITY</scope>
</reference>
<feature type="chain" id="PRO_0000079434" description="Reactive oxygen species modulator 1">
    <location>
        <begin position="1"/>
        <end position="79"/>
    </location>
</feature>
<feature type="transmembrane region" description="Helical" evidence="2">
    <location>
        <begin position="22"/>
        <end position="44"/>
    </location>
</feature>
<feature type="region of interest" description="Sufficient for antibacterial activity" evidence="1">
    <location>
        <begin position="42"/>
        <end position="60"/>
    </location>
</feature>
<evidence type="ECO:0000250" key="1"/>
<evidence type="ECO:0000255" key="2"/>
<evidence type="ECO:0000269" key="3">
    <source>
    </source>
</evidence>
<evidence type="ECO:0000305" key="4"/>
<keyword id="KW-0044">Antibiotic</keyword>
<keyword id="KW-0929">Antimicrobial</keyword>
<keyword id="KW-0472">Membrane</keyword>
<keyword id="KW-0496">Mitochondrion</keyword>
<keyword id="KW-0999">Mitochondrion inner membrane</keyword>
<keyword id="KW-1185">Reference proteome</keyword>
<keyword id="KW-0812">Transmembrane</keyword>
<keyword id="KW-1133">Transmembrane helix</keyword>
<gene>
    <name type="primary">Romo1</name>
</gene>
<sequence>MPVAVGPYGQSQPSCFDRVKMGFVMGCAVGMAAGALFGTFSCLRIGMRGRELMGGIGKTMMQSGGTFGTFMAIGMGIRC</sequence>
<dbReference type="EMBL" id="AY028425">
    <property type="protein sequence ID" value="AAK18748.1"/>
    <property type="molecule type" value="mRNA"/>
</dbReference>
<dbReference type="EMBL" id="AK003488">
    <property type="protein sequence ID" value="BAB22816.1"/>
    <property type="molecule type" value="mRNA"/>
</dbReference>
<dbReference type="EMBL" id="AK008300">
    <property type="protein sequence ID" value="BAB25585.1"/>
    <property type="molecule type" value="mRNA"/>
</dbReference>
<dbReference type="EMBL" id="BX649640">
    <property type="status" value="NOT_ANNOTATED_CDS"/>
    <property type="molecule type" value="Genomic_DNA"/>
</dbReference>
<dbReference type="EMBL" id="BC028749">
    <property type="protein sequence ID" value="AAH28749.1"/>
    <property type="molecule type" value="mRNA"/>
</dbReference>
<dbReference type="CCDS" id="CCDS38296.1"/>
<dbReference type="RefSeq" id="NP_001157688.1">
    <property type="nucleotide sequence ID" value="NM_001164216.1"/>
</dbReference>
<dbReference type="RefSeq" id="NP_001157689.1">
    <property type="nucleotide sequence ID" value="NM_001164217.2"/>
</dbReference>
<dbReference type="RefSeq" id="NP_080222.1">
    <property type="nucleotide sequence ID" value="NM_025946.6"/>
</dbReference>
<dbReference type="SMR" id="P60603"/>
<dbReference type="FunCoup" id="P60603">
    <property type="interactions" value="1427"/>
</dbReference>
<dbReference type="STRING" id="10090.ENSMUSP00000085981"/>
<dbReference type="iPTMnet" id="P60603"/>
<dbReference type="PhosphoSitePlus" id="P60603"/>
<dbReference type="SwissPalm" id="P60603"/>
<dbReference type="jPOST" id="P60603"/>
<dbReference type="PaxDb" id="10090-ENSMUSP00000085981"/>
<dbReference type="PeptideAtlas" id="P60603"/>
<dbReference type="ProteomicsDB" id="260828"/>
<dbReference type="Pumba" id="P60603"/>
<dbReference type="Antibodypedia" id="2412">
    <property type="antibodies" value="153 antibodies from 18 providers"/>
</dbReference>
<dbReference type="DNASU" id="67067"/>
<dbReference type="Ensembl" id="ENSMUST00000088610.11">
    <property type="protein sequence ID" value="ENSMUSP00000085981.5"/>
    <property type="gene ID" value="ENSMUSG00000067847.14"/>
</dbReference>
<dbReference type="Ensembl" id="ENSMUST00000109597.10">
    <property type="protein sequence ID" value="ENSMUSP00000105226.4"/>
    <property type="gene ID" value="ENSMUSG00000067847.14"/>
</dbReference>
<dbReference type="Ensembl" id="ENSMUST00000109598.4">
    <property type="protein sequence ID" value="ENSMUSP00000105227.4"/>
    <property type="gene ID" value="ENSMUSG00000067847.14"/>
</dbReference>
<dbReference type="Ensembl" id="ENSMUST00000119950.2">
    <property type="protein sequence ID" value="ENSMUSP00000113943.2"/>
    <property type="gene ID" value="ENSMUSG00000067847.14"/>
</dbReference>
<dbReference type="GeneID" id="67067"/>
<dbReference type="KEGG" id="mmu:67067"/>
<dbReference type="UCSC" id="uc008nmm.2">
    <property type="organism name" value="mouse"/>
</dbReference>
<dbReference type="AGR" id="MGI:1914317"/>
<dbReference type="CTD" id="140823"/>
<dbReference type="MGI" id="MGI:1914317">
    <property type="gene designation" value="Romo1"/>
</dbReference>
<dbReference type="VEuPathDB" id="HostDB:ENSMUSG00000067847"/>
<dbReference type="eggNOG" id="KOG4096">
    <property type="taxonomic scope" value="Eukaryota"/>
</dbReference>
<dbReference type="GeneTree" id="ENSGT00390000005315"/>
<dbReference type="HOGENOM" id="CLU_142435_2_0_1"/>
<dbReference type="InParanoid" id="P60603"/>
<dbReference type="OMA" id="SCWDRVK"/>
<dbReference type="OrthoDB" id="5409308at2759"/>
<dbReference type="PhylomeDB" id="P60603"/>
<dbReference type="TreeFam" id="TF300273"/>
<dbReference type="BioGRID-ORCS" id="67067">
    <property type="hits" value="30 hits in 76 CRISPR screens"/>
</dbReference>
<dbReference type="ChiTaRS" id="Romo1">
    <property type="organism name" value="mouse"/>
</dbReference>
<dbReference type="PRO" id="PR:P60603"/>
<dbReference type="Proteomes" id="UP000000589">
    <property type="component" value="Chromosome 2"/>
</dbReference>
<dbReference type="RNAct" id="P60603">
    <property type="molecule type" value="protein"/>
</dbReference>
<dbReference type="Bgee" id="ENSMUSG00000067847">
    <property type="expression patterns" value="Expressed in epithelium of small intestine and 130 other cell types or tissues"/>
</dbReference>
<dbReference type="GO" id="GO:0005739">
    <property type="term" value="C:mitochondrion"/>
    <property type="evidence" value="ECO:0007005"/>
    <property type="project" value="MGI"/>
</dbReference>
<dbReference type="GO" id="GO:0005744">
    <property type="term" value="C:TIM23 mitochondrial import inner membrane translocase complex"/>
    <property type="evidence" value="ECO:0007669"/>
    <property type="project" value="Ensembl"/>
</dbReference>
<dbReference type="GO" id="GO:0008324">
    <property type="term" value="F:monoatomic cation transmembrane transporter activity"/>
    <property type="evidence" value="ECO:0007669"/>
    <property type="project" value="Ensembl"/>
</dbReference>
<dbReference type="GO" id="GO:0061844">
    <property type="term" value="P:antimicrobial humoral immune response mediated by antimicrobial peptide"/>
    <property type="evidence" value="ECO:0007669"/>
    <property type="project" value="Ensembl"/>
</dbReference>
<dbReference type="GO" id="GO:0034614">
    <property type="term" value="P:cellular response to reactive oxygen species"/>
    <property type="evidence" value="ECO:0000250"/>
    <property type="project" value="UniProtKB"/>
</dbReference>
<dbReference type="GO" id="GO:0051838">
    <property type="term" value="P:cytolysis by host of symbiont cells"/>
    <property type="evidence" value="ECO:0007669"/>
    <property type="project" value="Ensembl"/>
</dbReference>
<dbReference type="GO" id="GO:0050829">
    <property type="term" value="P:defense response to Gram-negative bacterium"/>
    <property type="evidence" value="ECO:0007669"/>
    <property type="project" value="Ensembl"/>
</dbReference>
<dbReference type="GO" id="GO:0050830">
    <property type="term" value="P:defense response to Gram-positive bacterium"/>
    <property type="evidence" value="ECO:0007669"/>
    <property type="project" value="Ensembl"/>
</dbReference>
<dbReference type="GO" id="GO:2000379">
    <property type="term" value="P:positive regulation of reactive oxygen species metabolic process"/>
    <property type="evidence" value="ECO:0000250"/>
    <property type="project" value="UniProtKB"/>
</dbReference>
<dbReference type="GO" id="GO:0045039">
    <property type="term" value="P:protein insertion into mitochondrial inner membrane"/>
    <property type="evidence" value="ECO:0007669"/>
    <property type="project" value="Ensembl"/>
</dbReference>
<dbReference type="GO" id="GO:0090399">
    <property type="term" value="P:replicative senescence"/>
    <property type="evidence" value="ECO:0000250"/>
    <property type="project" value="UniProtKB"/>
</dbReference>
<dbReference type="InterPro" id="IPR018450">
    <property type="entry name" value="Romo1/Mgr2"/>
</dbReference>
<dbReference type="PANTHER" id="PTHR28525">
    <property type="entry name" value="REACTIVE OXYGEN SPECIES MODULATOR 1"/>
    <property type="match status" value="1"/>
</dbReference>
<dbReference type="PANTHER" id="PTHR28525:SF1">
    <property type="entry name" value="REACTIVE OXYGEN SPECIES MODULATOR 1"/>
    <property type="match status" value="1"/>
</dbReference>
<dbReference type="Pfam" id="PF10247">
    <property type="entry name" value="Romo1"/>
    <property type="match status" value="1"/>
</dbReference>
<dbReference type="SMART" id="SM01378">
    <property type="entry name" value="Romo1"/>
    <property type="match status" value="1"/>
</dbReference>
<organism>
    <name type="scientific">Mus musculus</name>
    <name type="common">Mouse</name>
    <dbReference type="NCBI Taxonomy" id="10090"/>
    <lineage>
        <taxon>Eukaryota</taxon>
        <taxon>Metazoa</taxon>
        <taxon>Chordata</taxon>
        <taxon>Craniata</taxon>
        <taxon>Vertebrata</taxon>
        <taxon>Euteleostomi</taxon>
        <taxon>Mammalia</taxon>
        <taxon>Eutheria</taxon>
        <taxon>Euarchontoglires</taxon>
        <taxon>Glires</taxon>
        <taxon>Rodentia</taxon>
        <taxon>Myomorpha</taxon>
        <taxon>Muroidea</taxon>
        <taxon>Muridae</taxon>
        <taxon>Murinae</taxon>
        <taxon>Mus</taxon>
        <taxon>Mus</taxon>
    </lineage>
</organism>
<protein>
    <recommendedName>
        <fullName>Reactive oxygen species modulator 1</fullName>
        <shortName>ROS modulator 1</shortName>
    </recommendedName>
    <alternativeName>
        <fullName>Protein MGR2 homolog</fullName>
    </alternativeName>
</protein>